<reference key="1">
    <citation type="journal article" date="1986" name="Nucleic Acids Res.">
        <title>Nucleotide sequence analysis of the trimethoprim resistant dihydrofolate reductase encoded by R plasmid R751.</title>
        <authorList>
            <person name="Flensburg J."/>
            <person name="Steen R."/>
        </authorList>
    </citation>
    <scope>NUCLEOTIDE SEQUENCE [GENOMIC DNA]</scope>
</reference>
<reference key="2">
    <citation type="submission" date="1993-03" db="EMBL/GenBank/DDBJ databases">
        <authorList>
            <person name="Radstroem P."/>
            <person name="Sundstroem L."/>
            <person name="Swedberg G."/>
            <person name="Flensburg J."/>
            <person name="Skoeld O."/>
        </authorList>
    </citation>
    <scope>NUCLEOTIDE SEQUENCE [GENOMIC DNA]</scope>
</reference>
<reference key="3">
    <citation type="submission" date="1996-08" db="EMBL/GenBank/DDBJ databases">
        <authorList>
            <person name="Thomas C.M."/>
        </authorList>
    </citation>
    <scope>NUCLEOTIDE SEQUENCE [GENOMIC DNA]</scope>
</reference>
<accession>P05794</accession>
<evidence type="ECO:0000250" key="1"/>
<protein>
    <recommendedName>
        <fullName>Dihydrofolate reductase type 2</fullName>
        <ecNumber>1.5.1.3</ecNumber>
    </recommendedName>
    <alternativeName>
        <fullName>Dihydrofolate reductase type II</fullName>
    </alternativeName>
</protein>
<comment type="function">
    <text evidence="1">Key enzyme in folate metabolism. Catalyzes an essential reaction for de novo glycine and purine synthesis, and for DNA precursor synthesis (By similarity).</text>
</comment>
<comment type="catalytic activity">
    <reaction>
        <text>(6S)-5,6,7,8-tetrahydrofolate + NADP(+) = 7,8-dihydrofolate + NADPH + H(+)</text>
        <dbReference type="Rhea" id="RHEA:15009"/>
        <dbReference type="ChEBI" id="CHEBI:15378"/>
        <dbReference type="ChEBI" id="CHEBI:57451"/>
        <dbReference type="ChEBI" id="CHEBI:57453"/>
        <dbReference type="ChEBI" id="CHEBI:57783"/>
        <dbReference type="ChEBI" id="CHEBI:58349"/>
        <dbReference type="EC" id="1.5.1.3"/>
    </reaction>
</comment>
<comment type="pathway">
    <text>Cofactor biosynthesis; tetrahydrofolate biosynthesis; 5,6,7,8-tetrahydrofolate from 7,8-dihydrofolate: step 1/1.</text>
</comment>
<comment type="subunit">
    <text evidence="1">Homotetramer.</text>
</comment>
<comment type="domain">
    <text evidence="1">The active site is situated at the inner surface of a pore formed by the four subunits.</text>
</comment>
<comment type="miscellaneous">
    <text>Type II plasmid-specified enzyme is practically insensitive to trimethoprim and methotrexate.</text>
</comment>
<name>DYR23_ECOLX</name>
<sequence length="78" mass="8328">MDQHNNGVSTLVAGQFALPSHATFGLGDRVRKKSGAAWQGQVVGWYCTKLTPEGYAVESESHPGSVQIYPVAALERVA</sequence>
<proteinExistence type="inferred from homology"/>
<organism>
    <name type="scientific">Escherichia coli</name>
    <dbReference type="NCBI Taxonomy" id="562"/>
    <lineage>
        <taxon>Bacteria</taxon>
        <taxon>Pseudomonadati</taxon>
        <taxon>Pseudomonadota</taxon>
        <taxon>Gammaproteobacteria</taxon>
        <taxon>Enterobacterales</taxon>
        <taxon>Enterobacteriaceae</taxon>
        <taxon>Escherichia</taxon>
    </lineage>
</organism>
<dbReference type="EC" id="1.5.1.3"/>
<dbReference type="EMBL" id="X04128">
    <property type="protein sequence ID" value="CAA27740.1"/>
    <property type="molecule type" value="Genomic_DNA"/>
</dbReference>
<dbReference type="EMBL" id="X72585">
    <property type="protein sequence ID" value="CAA51181.1"/>
    <property type="molecule type" value="Genomic_DNA"/>
</dbReference>
<dbReference type="EMBL" id="U67194">
    <property type="protein sequence ID" value="AAC64461.1"/>
    <property type="molecule type" value="Genomic_DNA"/>
</dbReference>
<dbReference type="PIR" id="A23598">
    <property type="entry name" value="RDECD5"/>
</dbReference>
<dbReference type="PIR" id="S32183">
    <property type="entry name" value="S32183"/>
</dbReference>
<dbReference type="RefSeq" id="WP_010890144.1">
    <property type="nucleotide sequence ID" value="NZ_KU997026.1"/>
</dbReference>
<dbReference type="SMR" id="P05794"/>
<dbReference type="CARD" id="ARO:3003022">
    <property type="molecule name" value="dfrB3"/>
    <property type="mechanism identifier" value="ARO:0001002"/>
    <property type="mechanism name" value="antibiotic target replacement"/>
</dbReference>
<dbReference type="KEGG" id="ag:CAA51181"/>
<dbReference type="UniPathway" id="UPA00077">
    <property type="reaction ID" value="UER00158"/>
</dbReference>
<dbReference type="GO" id="GO:0004146">
    <property type="term" value="F:dihydrofolate reductase activity"/>
    <property type="evidence" value="ECO:0007669"/>
    <property type="project" value="UniProtKB-EC"/>
</dbReference>
<dbReference type="GO" id="GO:0006730">
    <property type="term" value="P:one-carbon metabolic process"/>
    <property type="evidence" value="ECO:0007669"/>
    <property type="project" value="UniProtKB-KW"/>
</dbReference>
<dbReference type="GO" id="GO:0046677">
    <property type="term" value="P:response to antibiotic"/>
    <property type="evidence" value="ECO:0007669"/>
    <property type="project" value="UniProtKB-KW"/>
</dbReference>
<dbReference type="GO" id="GO:0031427">
    <property type="term" value="P:response to methotrexate"/>
    <property type="evidence" value="ECO:0007669"/>
    <property type="project" value="UniProtKB-KW"/>
</dbReference>
<dbReference type="GO" id="GO:0009410">
    <property type="term" value="P:response to xenobiotic stimulus"/>
    <property type="evidence" value="ECO:0007669"/>
    <property type="project" value="InterPro"/>
</dbReference>
<dbReference type="GO" id="GO:0046654">
    <property type="term" value="P:tetrahydrofolate biosynthetic process"/>
    <property type="evidence" value="ECO:0007669"/>
    <property type="project" value="UniProtKB-UniPathway"/>
</dbReference>
<dbReference type="Gene3D" id="2.30.30.60">
    <property type="match status" value="1"/>
</dbReference>
<dbReference type="InterPro" id="IPR009159">
    <property type="entry name" value="Dhfr_type_II"/>
</dbReference>
<dbReference type="InterPro" id="IPR008990">
    <property type="entry name" value="Elect_transpt_acc-like_dom_sf"/>
</dbReference>
<dbReference type="InterPro" id="IPR023408">
    <property type="entry name" value="MscS_beta-dom_sf"/>
</dbReference>
<dbReference type="NCBIfam" id="NF000331">
    <property type="entry name" value="trim_DfrB"/>
    <property type="match status" value="1"/>
</dbReference>
<dbReference type="Pfam" id="PF06442">
    <property type="entry name" value="DHFR_2"/>
    <property type="match status" value="1"/>
</dbReference>
<dbReference type="PIRSF" id="PIRSF000199">
    <property type="entry name" value="Dhfr_type_II"/>
    <property type="match status" value="1"/>
</dbReference>
<dbReference type="SUPFAM" id="SSF50090">
    <property type="entry name" value="Electron transport accessory proteins"/>
    <property type="match status" value="1"/>
</dbReference>
<geneLocation type="plasmid">
    <name>IncP-beta R751</name>
</geneLocation>
<keyword id="KW-0046">Antibiotic resistance</keyword>
<keyword id="KW-0487">Methotrexate resistance</keyword>
<keyword id="KW-0521">NADP</keyword>
<keyword id="KW-0554">One-carbon metabolism</keyword>
<keyword id="KW-0560">Oxidoreductase</keyword>
<keyword id="KW-0614">Plasmid</keyword>
<keyword id="KW-0817">Trimethoprim resistance</keyword>
<feature type="chain" id="PRO_0000186437" description="Dihydrofolate reductase type 2">
    <location>
        <begin position="1"/>
        <end position="78"/>
    </location>
</feature>
<feature type="binding site" evidence="1">
    <location>
        <position position="32"/>
    </location>
    <ligand>
        <name>NADP(+)</name>
        <dbReference type="ChEBI" id="CHEBI:58349"/>
    </ligand>
</feature>
<feature type="binding site" evidence="1">
    <location>
        <begin position="66"/>
        <end position="69"/>
    </location>
    <ligand>
        <name>NADP(+)</name>
        <dbReference type="ChEBI" id="CHEBI:58349"/>
    </ligand>
</feature>
<feature type="binding site" evidence="1">
    <location>
        <position position="68"/>
    </location>
    <ligand>
        <name>substrate</name>
    </ligand>
</feature>